<feature type="chain" id="PRO_0000318744" description="Cytoplasmic dynein 2 heavy chain 1">
    <location>
        <begin position="1"/>
        <end position="4306"/>
    </location>
</feature>
<feature type="region of interest" description="Stem" evidence="1">
    <location>
        <begin position="1"/>
        <end position="1650"/>
    </location>
</feature>
<feature type="region of interest" description="AAA 1" evidence="1">
    <location>
        <begin position="1651"/>
        <end position="1875"/>
    </location>
</feature>
<feature type="region of interest" description="AAA 2" evidence="1">
    <location>
        <begin position="1941"/>
        <end position="2161"/>
    </location>
</feature>
<feature type="region of interest" description="AAA 3" evidence="1">
    <location>
        <begin position="2249"/>
        <end position="2505"/>
    </location>
</feature>
<feature type="region of interest" description="AAA 4" evidence="1">
    <location>
        <begin position="2617"/>
        <end position="2862"/>
    </location>
</feature>
<feature type="region of interest" description="Stalk" evidence="1">
    <location>
        <begin position="2880"/>
        <end position="3168"/>
    </location>
</feature>
<feature type="region of interest" description="AAA 5" evidence="1">
    <location>
        <begin position="3243"/>
        <end position="3472"/>
    </location>
</feature>
<feature type="region of interest" description="AAA 6" evidence="1">
    <location>
        <begin position="3689"/>
        <end position="3904"/>
    </location>
</feature>
<feature type="coiled-coil region" evidence="3">
    <location>
        <begin position="669"/>
        <end position="696"/>
    </location>
</feature>
<feature type="coiled-coil region" evidence="3">
    <location>
        <begin position="2896"/>
        <end position="2981"/>
    </location>
</feature>
<feature type="coiled-coil region" evidence="3">
    <location>
        <begin position="3108"/>
        <end position="3199"/>
    </location>
</feature>
<feature type="coiled-coil region" evidence="3">
    <location>
        <begin position="3407"/>
        <end position="3441"/>
    </location>
</feature>
<feature type="binding site" evidence="3">
    <location>
        <begin position="145"/>
        <end position="152"/>
    </location>
    <ligand>
        <name>ATP</name>
        <dbReference type="ChEBI" id="CHEBI:30616"/>
    </ligand>
</feature>
<feature type="binding site" evidence="3">
    <location>
        <begin position="1689"/>
        <end position="1696"/>
    </location>
    <ligand>
        <name>ATP</name>
        <dbReference type="ChEBI" id="CHEBI:30616"/>
    </ligand>
</feature>
<feature type="binding site" evidence="3">
    <location>
        <begin position="1979"/>
        <end position="1986"/>
    </location>
    <ligand>
        <name>ATP</name>
        <dbReference type="ChEBI" id="CHEBI:30616"/>
    </ligand>
</feature>
<feature type="binding site" evidence="3">
    <location>
        <begin position="2291"/>
        <end position="2298"/>
    </location>
    <ligand>
        <name>ATP</name>
        <dbReference type="ChEBI" id="CHEBI:30616"/>
    </ligand>
</feature>
<feature type="binding site" evidence="3">
    <location>
        <begin position="2655"/>
        <end position="2662"/>
    </location>
    <ligand>
        <name>ATP</name>
        <dbReference type="ChEBI" id="CHEBI:30616"/>
    </ligand>
</feature>
<feature type="splice variant" id="VSP_031284" description="In isoform 3." evidence="9">
    <original>L</original>
    <variation>P</variation>
    <location>
        <position position="335"/>
    </location>
</feature>
<feature type="splice variant" id="VSP_031285" description="In isoform 3." evidence="9">
    <location>
        <begin position="337"/>
        <end position="4306"/>
    </location>
</feature>
<feature type="splice variant" id="VSP_031286" description="In isoform 2." evidence="10">
    <original>Q</original>
    <variation>QIIGLKSW</variation>
    <location>
        <position position="3272"/>
    </location>
</feature>
<feature type="mutagenesis site" description="Loss of function." evidence="7">
    <original>W</original>
    <variation>R</variation>
    <location>
        <position position="2502"/>
    </location>
</feature>
<feature type="mutagenesis site" description="In lln mutant; loss of function." evidence="6">
    <original>F</original>
    <variation>S</variation>
    <location>
        <position position="3890"/>
    </location>
</feature>
<feature type="sequence conflict" description="In Ref. 2; BAC28057." evidence="11" ref="2">
    <original>L</original>
    <variation>F</variation>
    <location>
        <position position="33"/>
    </location>
</feature>
<feature type="sequence conflict" description="In Ref. 4; AAS15576." evidence="11" ref="4">
    <original>A</original>
    <variation>P</variation>
    <location>
        <position position="1254"/>
    </location>
</feature>
<feature type="sequence conflict" description="In Ref. 5; CAB06063." evidence="11" ref="5">
    <original>Y</original>
    <variation>I</variation>
    <location>
        <position position="1664"/>
    </location>
</feature>
<feature type="sequence conflict" description="In Ref. 5; CAB06063." evidence="11" ref="5">
    <original>P</original>
    <variation>G</variation>
    <location>
        <position position="1687"/>
    </location>
</feature>
<feature type="sequence conflict" description="In Ref. 5; CAB06063." evidence="11" ref="5">
    <original>E</original>
    <variation>D</variation>
    <location>
        <position position="1773"/>
    </location>
</feature>
<feature type="sequence conflict" description="In Ref. 5; CAB06063." evidence="11" ref="5">
    <original>W</original>
    <variation>Y</variation>
    <location>
        <position position="1864"/>
    </location>
</feature>
<feature type="sequence conflict" description="In Ref. 5; CAB06063." evidence="11" ref="5">
    <original>LR</original>
    <variation>IS</variation>
    <location>
        <begin position="1866"/>
        <end position="1867"/>
    </location>
</feature>
<feature type="sequence conflict" description="In Ref. 4; AAS15578." evidence="11" ref="4">
    <original>P</original>
    <variation>R</variation>
    <location>
        <position position="2687"/>
    </location>
</feature>
<feature type="sequence conflict" description="In Ref. 2; BAC38914." evidence="11" ref="2">
    <original>Q</original>
    <variation>K</variation>
    <location>
        <position position="2699"/>
    </location>
</feature>
<feature type="sequence conflict" description="In Ref. 4; AAS15578." evidence="11" ref="4">
    <original>E</original>
    <variation>K</variation>
    <location>
        <position position="2734"/>
    </location>
</feature>
<protein>
    <recommendedName>
        <fullName>Cytoplasmic dynein 2 heavy chain 1</fullName>
    </recommendedName>
    <alternativeName>
        <fullName>Cytoplasmic dynein 2 heavy chain</fullName>
    </alternativeName>
    <alternativeName>
        <fullName>Dynein cytoplasmic heavy chain 2</fullName>
    </alternativeName>
    <alternativeName>
        <fullName>Dynein heavy chain 11</fullName>
        <shortName>mDHC11</shortName>
    </alternativeName>
    <alternativeName>
        <fullName>Dynein heavy chain isotype 1B</fullName>
    </alternativeName>
</protein>
<dbReference type="EMBL" id="DQ104402">
    <property type="protein sequence ID" value="AAZ41367.1"/>
    <property type="molecule type" value="mRNA"/>
</dbReference>
<dbReference type="EMBL" id="AK014500">
    <property type="protein sequence ID" value="BAB29399.2"/>
    <property type="status" value="ALT_INIT"/>
    <property type="molecule type" value="mRNA"/>
</dbReference>
<dbReference type="EMBL" id="AK032860">
    <property type="protein sequence ID" value="BAC28057.1"/>
    <property type="molecule type" value="mRNA"/>
</dbReference>
<dbReference type="EMBL" id="AK045978">
    <property type="protein sequence ID" value="BAC32559.1"/>
    <property type="molecule type" value="mRNA"/>
</dbReference>
<dbReference type="EMBL" id="AK046538">
    <property type="protein sequence ID" value="BAC32776.1"/>
    <property type="molecule type" value="mRNA"/>
</dbReference>
<dbReference type="EMBL" id="AK083433">
    <property type="protein sequence ID" value="BAC38914.1"/>
    <property type="status" value="ALT_INIT"/>
    <property type="molecule type" value="mRNA"/>
</dbReference>
<dbReference type="EMBL" id="AK084796">
    <property type="protein sequence ID" value="BAC39280.1"/>
    <property type="molecule type" value="mRNA"/>
</dbReference>
<dbReference type="EMBL" id="AC155908">
    <property type="status" value="NOT_ANNOTATED_CDS"/>
    <property type="molecule type" value="Genomic_DNA"/>
</dbReference>
<dbReference type="EMBL" id="CT010499">
    <property type="status" value="NOT_ANNOTATED_CDS"/>
    <property type="molecule type" value="Genomic_DNA"/>
</dbReference>
<dbReference type="EMBL" id="AY452064">
    <property type="protein sequence ID" value="AAS15576.1"/>
    <property type="molecule type" value="mRNA"/>
</dbReference>
<dbReference type="EMBL" id="AY452065">
    <property type="protein sequence ID" value="AAS15577.1"/>
    <property type="molecule type" value="mRNA"/>
</dbReference>
<dbReference type="EMBL" id="AY452066">
    <property type="protein sequence ID" value="AAS15578.1"/>
    <property type="molecule type" value="mRNA"/>
</dbReference>
<dbReference type="EMBL" id="AY452067">
    <property type="protein sequence ID" value="AAS15579.1"/>
    <property type="molecule type" value="mRNA"/>
</dbReference>
<dbReference type="EMBL" id="Z83809">
    <property type="protein sequence ID" value="CAB06063.1"/>
    <property type="molecule type" value="mRNA"/>
</dbReference>
<dbReference type="EMBL" id="AK173324">
    <property type="protein sequence ID" value="BAD32602.1"/>
    <property type="molecule type" value="mRNA"/>
</dbReference>
<dbReference type="CCDS" id="CCDS40528.1">
    <molecule id="Q45VK7-1"/>
</dbReference>
<dbReference type="RefSeq" id="NP_084127.2">
    <molecule id="Q45VK7-1"/>
    <property type="nucleotide sequence ID" value="NM_029851.2"/>
</dbReference>
<dbReference type="RefSeq" id="XP_006509889.1">
    <property type="nucleotide sequence ID" value="XM_006509826.3"/>
</dbReference>
<dbReference type="RefSeq" id="XP_030099868.1">
    <molecule id="Q45VK7-2"/>
    <property type="nucleotide sequence ID" value="XM_030244008.2"/>
</dbReference>
<dbReference type="RefSeq" id="XP_030099869.1">
    <molecule id="Q45VK7-1"/>
    <property type="nucleotide sequence ID" value="XM_030244009.2"/>
</dbReference>
<dbReference type="SMR" id="Q45VK7"/>
<dbReference type="BioGRID" id="225520">
    <property type="interactions" value="2"/>
</dbReference>
<dbReference type="FunCoup" id="Q45VK7">
    <property type="interactions" value="541"/>
</dbReference>
<dbReference type="STRING" id="10090.ENSMUSP00000120007"/>
<dbReference type="GlyGen" id="Q45VK7">
    <property type="glycosylation" value="2 sites, 1 O-linked glycan (1 site)"/>
</dbReference>
<dbReference type="iPTMnet" id="Q45VK7"/>
<dbReference type="PhosphoSitePlus" id="Q45VK7"/>
<dbReference type="SwissPalm" id="Q45VK7"/>
<dbReference type="PaxDb" id="10090-ENSMUSP00000116679"/>
<dbReference type="ProteomicsDB" id="277423">
    <molecule id="Q45VK7-1"/>
</dbReference>
<dbReference type="ProteomicsDB" id="277424">
    <molecule id="Q45VK7-2"/>
</dbReference>
<dbReference type="ProteomicsDB" id="277425">
    <molecule id="Q45VK7-3"/>
</dbReference>
<dbReference type="Antibodypedia" id="51715">
    <property type="antibodies" value="51 antibodies from 13 providers"/>
</dbReference>
<dbReference type="Ensembl" id="ENSMUST00000048417.13">
    <molecule id="Q45VK7-1"/>
    <property type="protein sequence ID" value="ENSMUSP00000046733.7"/>
    <property type="gene ID" value="ENSMUSG00000047193.17"/>
</dbReference>
<dbReference type="Ensembl" id="ENSMUST00000140466.8">
    <molecule id="Q45VK7-1"/>
    <property type="protein sequence ID" value="ENSMUSP00000120007.2"/>
    <property type="gene ID" value="ENSMUSG00000047193.17"/>
</dbReference>
<dbReference type="Ensembl" id="ENSMUST00000147193.8">
    <molecule id="Q45VK7-2"/>
    <property type="protein sequence ID" value="ENSMUSP00000116679.2"/>
    <property type="gene ID" value="ENSMUSG00000047193.17"/>
</dbReference>
<dbReference type="GeneID" id="110350"/>
<dbReference type="KEGG" id="mmu:110350"/>
<dbReference type="UCSC" id="uc009occ.1">
    <molecule id="Q45VK7-1"/>
    <property type="organism name" value="mouse"/>
</dbReference>
<dbReference type="AGR" id="MGI:107736"/>
<dbReference type="CTD" id="79659"/>
<dbReference type="MGI" id="MGI:107736">
    <property type="gene designation" value="Dync2h1"/>
</dbReference>
<dbReference type="VEuPathDB" id="HostDB:ENSMUSG00000047193"/>
<dbReference type="eggNOG" id="KOG3595">
    <property type="taxonomic scope" value="Eukaryota"/>
</dbReference>
<dbReference type="GeneTree" id="ENSGT00940000154620"/>
<dbReference type="HOGENOM" id="CLU_000038_7_2_1"/>
<dbReference type="InParanoid" id="Q45VK7"/>
<dbReference type="OMA" id="WCKERVS"/>
<dbReference type="TreeFam" id="TF315251"/>
<dbReference type="Reactome" id="R-MMU-5610787">
    <property type="pathway name" value="Hedgehog 'off' state"/>
</dbReference>
<dbReference type="Reactome" id="R-MMU-5620924">
    <property type="pathway name" value="Intraflagellar transport"/>
</dbReference>
<dbReference type="BioGRID-ORCS" id="110350">
    <property type="hits" value="4 hits in 77 CRISPR screens"/>
</dbReference>
<dbReference type="ChiTaRS" id="Dync2h1">
    <property type="organism name" value="mouse"/>
</dbReference>
<dbReference type="PRO" id="PR:Q45VK7"/>
<dbReference type="Proteomes" id="UP000000589">
    <property type="component" value="Chromosome 9"/>
</dbReference>
<dbReference type="RNAct" id="Q45VK7">
    <property type="molecule type" value="protein"/>
</dbReference>
<dbReference type="Bgee" id="ENSMUSG00000047193">
    <property type="expression patterns" value="Expressed in spermatocyte and 212 other cell types or tissues"/>
</dbReference>
<dbReference type="ExpressionAtlas" id="Q45VK7">
    <property type="expression patterns" value="baseline and differential"/>
</dbReference>
<dbReference type="GO" id="GO:0045177">
    <property type="term" value="C:apical part of cell"/>
    <property type="evidence" value="ECO:0000314"/>
    <property type="project" value="BHF-UCL"/>
</dbReference>
<dbReference type="GO" id="GO:0005930">
    <property type="term" value="C:axoneme"/>
    <property type="evidence" value="ECO:0000314"/>
    <property type="project" value="BHF-UCL"/>
</dbReference>
<dbReference type="GO" id="GO:0005868">
    <property type="term" value="C:cytoplasmic dynein complex"/>
    <property type="evidence" value="ECO:0000255"/>
    <property type="project" value="MGI"/>
</dbReference>
<dbReference type="GO" id="GO:0005794">
    <property type="term" value="C:Golgi apparatus"/>
    <property type="evidence" value="ECO:0007669"/>
    <property type="project" value="Ensembl"/>
</dbReference>
<dbReference type="GO" id="GO:0005874">
    <property type="term" value="C:microtubule"/>
    <property type="evidence" value="ECO:0007669"/>
    <property type="project" value="UniProtKB-KW"/>
</dbReference>
<dbReference type="GO" id="GO:0031514">
    <property type="term" value="C:motile cilium"/>
    <property type="evidence" value="ECO:0000314"/>
    <property type="project" value="BHF-UCL"/>
</dbReference>
<dbReference type="GO" id="GO:0005886">
    <property type="term" value="C:plasma membrane"/>
    <property type="evidence" value="ECO:0007669"/>
    <property type="project" value="UniProtKB-SubCell"/>
</dbReference>
<dbReference type="GO" id="GO:0005524">
    <property type="term" value="F:ATP binding"/>
    <property type="evidence" value="ECO:0007669"/>
    <property type="project" value="UniProtKB-KW"/>
</dbReference>
<dbReference type="GO" id="GO:0016887">
    <property type="term" value="F:ATP hydrolysis activity"/>
    <property type="evidence" value="ECO:0007669"/>
    <property type="project" value="InterPro"/>
</dbReference>
<dbReference type="GO" id="GO:0045505">
    <property type="term" value="F:dynein intermediate chain binding"/>
    <property type="evidence" value="ECO:0007669"/>
    <property type="project" value="InterPro"/>
</dbReference>
<dbReference type="GO" id="GO:0051959">
    <property type="term" value="F:dynein light intermediate chain binding"/>
    <property type="evidence" value="ECO:0007669"/>
    <property type="project" value="InterPro"/>
</dbReference>
<dbReference type="GO" id="GO:0008569">
    <property type="term" value="F:minus-end-directed microtubule motor activity"/>
    <property type="evidence" value="ECO:0007669"/>
    <property type="project" value="Ensembl"/>
</dbReference>
<dbReference type="GO" id="GO:0021953">
    <property type="term" value="P:central nervous system neuron differentiation"/>
    <property type="evidence" value="ECO:0000315"/>
    <property type="project" value="MGI"/>
</dbReference>
<dbReference type="GO" id="GO:0060271">
    <property type="term" value="P:cilium assembly"/>
    <property type="evidence" value="ECO:0000315"/>
    <property type="project" value="MGI"/>
</dbReference>
<dbReference type="GO" id="GO:0060976">
    <property type="term" value="P:coronary vasculature development"/>
    <property type="evidence" value="ECO:0000315"/>
    <property type="project" value="MGI"/>
</dbReference>
<dbReference type="GO" id="GO:0007368">
    <property type="term" value="P:determination of left/right symmetry"/>
    <property type="evidence" value="ECO:0000315"/>
    <property type="project" value="MGI"/>
</dbReference>
<dbReference type="GO" id="GO:0009953">
    <property type="term" value="P:dorsal/ventral pattern formation"/>
    <property type="evidence" value="ECO:0000315"/>
    <property type="project" value="MGI"/>
</dbReference>
<dbReference type="GO" id="GO:0030326">
    <property type="term" value="P:embryonic limb morphogenesis"/>
    <property type="evidence" value="ECO:0000315"/>
    <property type="project" value="MGI"/>
</dbReference>
<dbReference type="GO" id="GO:0030900">
    <property type="term" value="P:forebrain development"/>
    <property type="evidence" value="ECO:0000315"/>
    <property type="project" value="MGI"/>
</dbReference>
<dbReference type="GO" id="GO:0007030">
    <property type="term" value="P:Golgi organization"/>
    <property type="evidence" value="ECO:0007669"/>
    <property type="project" value="Ensembl"/>
</dbReference>
<dbReference type="GO" id="GO:0007507">
    <property type="term" value="P:heart development"/>
    <property type="evidence" value="ECO:0000315"/>
    <property type="project" value="MGI"/>
</dbReference>
<dbReference type="GO" id="GO:0035721">
    <property type="term" value="P:intraciliary retrograde transport"/>
    <property type="evidence" value="ECO:0000315"/>
    <property type="project" value="MGI"/>
</dbReference>
<dbReference type="GO" id="GO:0001822">
    <property type="term" value="P:kidney development"/>
    <property type="evidence" value="ECO:0000315"/>
    <property type="project" value="MGI"/>
</dbReference>
<dbReference type="GO" id="GO:0030182">
    <property type="term" value="P:neuron differentiation"/>
    <property type="evidence" value="ECO:0000315"/>
    <property type="project" value="MGI"/>
</dbReference>
<dbReference type="GO" id="GO:1905515">
    <property type="term" value="P:non-motile cilium assembly"/>
    <property type="evidence" value="ECO:0000315"/>
    <property type="project" value="MGI"/>
</dbReference>
<dbReference type="GO" id="GO:0045880">
    <property type="term" value="P:positive regulation of smoothened signaling pathway"/>
    <property type="evidence" value="ECO:0000315"/>
    <property type="project" value="MGI"/>
</dbReference>
<dbReference type="GO" id="GO:0061512">
    <property type="term" value="P:protein localization to cilium"/>
    <property type="evidence" value="ECO:0000315"/>
    <property type="project" value="MGI"/>
</dbReference>
<dbReference type="GO" id="GO:0016485">
    <property type="term" value="P:protein processing"/>
    <property type="evidence" value="ECO:0000315"/>
    <property type="project" value="MGI"/>
</dbReference>
<dbReference type="GO" id="GO:0021522">
    <property type="term" value="P:spinal cord motor neuron differentiation"/>
    <property type="evidence" value="ECO:0000316"/>
    <property type="project" value="MGI"/>
</dbReference>
<dbReference type="FunFam" id="1.20.920.20:FF:000002">
    <property type="entry name" value="Cytoplasmic dynein 1 heavy chain"/>
    <property type="match status" value="1"/>
</dbReference>
<dbReference type="FunFam" id="1.20.920.30:FF:000006">
    <property type="entry name" value="Cytoplasmic dynein 2 heavy chain 1"/>
    <property type="match status" value="1"/>
</dbReference>
<dbReference type="FunFam" id="3.40.50.300:FF:000706">
    <property type="entry name" value="Cytoplasmic dynein 2 heavy chain 1"/>
    <property type="match status" value="1"/>
</dbReference>
<dbReference type="FunFam" id="3.40.50.300:FF:000710">
    <property type="entry name" value="Cytoplasmic dynein 2 heavy chain 1"/>
    <property type="match status" value="1"/>
</dbReference>
<dbReference type="FunFam" id="3.40.50.300:FF:001810">
    <property type="entry name" value="Cytoplasmic dynein 2 heavy chain 1"/>
    <property type="match status" value="1"/>
</dbReference>
<dbReference type="FunFam" id="3.40.50.300:FF:002654">
    <property type="entry name" value="Cytoplasmic dynein 2 heavy chain 1"/>
    <property type="match status" value="1"/>
</dbReference>
<dbReference type="FunFam" id="1.10.8.710:FF:000006">
    <property type="entry name" value="cytoplasmic dynein 2 heavy chain 1"/>
    <property type="match status" value="1"/>
</dbReference>
<dbReference type="FunFam" id="1.10.8.720:FF:000006">
    <property type="entry name" value="cytoplasmic dynein 2 heavy chain 1"/>
    <property type="match status" value="1"/>
</dbReference>
<dbReference type="FunFam" id="1.20.140.100:FF:000005">
    <property type="entry name" value="cytoplasmic dynein 2 heavy chain 1"/>
    <property type="match status" value="1"/>
</dbReference>
<dbReference type="FunFam" id="1.20.58.1120:FF:000006">
    <property type="entry name" value="cytoplasmic dynein 2 heavy chain 1"/>
    <property type="match status" value="1"/>
</dbReference>
<dbReference type="FunFam" id="3.20.180.20:FF:000002">
    <property type="entry name" value="Cytoplasmic dynein heavy chain 1"/>
    <property type="match status" value="1"/>
</dbReference>
<dbReference type="FunFam" id="3.40.50.300:FF:000071">
    <property type="entry name" value="Cytoplasmic dynein heavy chain 1"/>
    <property type="match status" value="1"/>
</dbReference>
<dbReference type="FunFam" id="1.10.8.1220:FF:000003">
    <property type="entry name" value="Dynein cytoplasmic 2 heavy chain 1"/>
    <property type="match status" value="1"/>
</dbReference>
<dbReference type="FunFam" id="1.20.1270.280:FF:000006">
    <property type="entry name" value="Dynein cytoplasmic 2 heavy chain 1"/>
    <property type="match status" value="1"/>
</dbReference>
<dbReference type="FunFam" id="3.10.490.20:FF:000007">
    <property type="entry name" value="Dynein cytoplasmic 2 heavy chain 1"/>
    <property type="match status" value="1"/>
</dbReference>
<dbReference type="FunFam" id="3.40.50.300:FF:000598">
    <property type="entry name" value="Dynein cytoplasmic 2 heavy chain 1"/>
    <property type="match status" value="1"/>
</dbReference>
<dbReference type="Gene3D" id="1.10.8.1220">
    <property type="match status" value="1"/>
</dbReference>
<dbReference type="Gene3D" id="1.10.8.710">
    <property type="match status" value="1"/>
</dbReference>
<dbReference type="Gene3D" id="1.20.1270.280">
    <property type="match status" value="1"/>
</dbReference>
<dbReference type="Gene3D" id="1.20.58.1120">
    <property type="match status" value="1"/>
</dbReference>
<dbReference type="Gene3D" id="1.20.920.20">
    <property type="match status" value="1"/>
</dbReference>
<dbReference type="Gene3D" id="1.20.920.30">
    <property type="match status" value="1"/>
</dbReference>
<dbReference type="Gene3D" id="3.10.490.20">
    <property type="match status" value="1"/>
</dbReference>
<dbReference type="Gene3D" id="6.10.140.1060">
    <property type="match status" value="1"/>
</dbReference>
<dbReference type="Gene3D" id="1.20.140.100">
    <property type="entry name" value="Dynein heavy chain, N-terminal domain 2"/>
    <property type="match status" value="1"/>
</dbReference>
<dbReference type="Gene3D" id="3.20.180.20">
    <property type="entry name" value="Dynein heavy chain, N-terminal domain 2"/>
    <property type="match status" value="1"/>
</dbReference>
<dbReference type="Gene3D" id="3.40.50.300">
    <property type="entry name" value="P-loop containing nucleotide triphosphate hydrolases"/>
    <property type="match status" value="5"/>
</dbReference>
<dbReference type="Gene3D" id="1.10.8.720">
    <property type="entry name" value="Region D6 of dynein motor"/>
    <property type="match status" value="1"/>
</dbReference>
<dbReference type="InterPro" id="IPR003593">
    <property type="entry name" value="AAA+_ATPase"/>
</dbReference>
<dbReference type="InterPro" id="IPR035699">
    <property type="entry name" value="AAA_6"/>
</dbReference>
<dbReference type="InterPro" id="IPR035706">
    <property type="entry name" value="AAA_9"/>
</dbReference>
<dbReference type="InterPro" id="IPR041658">
    <property type="entry name" value="AAA_lid_11"/>
</dbReference>
<dbReference type="InterPro" id="IPR042219">
    <property type="entry name" value="AAA_lid_11_sf"/>
</dbReference>
<dbReference type="InterPro" id="IPR026983">
    <property type="entry name" value="DHC"/>
</dbReference>
<dbReference type="InterPro" id="IPR054354">
    <property type="entry name" value="DYNC2H1-like_lid"/>
</dbReference>
<dbReference type="InterPro" id="IPR049400">
    <property type="entry name" value="DYNC2H1_AAA_dom"/>
</dbReference>
<dbReference type="InterPro" id="IPR042222">
    <property type="entry name" value="Dynein_2_N"/>
</dbReference>
<dbReference type="InterPro" id="IPR043157">
    <property type="entry name" value="Dynein_AAA1S"/>
</dbReference>
<dbReference type="InterPro" id="IPR041228">
    <property type="entry name" value="Dynein_C"/>
</dbReference>
<dbReference type="InterPro" id="IPR043160">
    <property type="entry name" value="Dynein_C_barrel"/>
</dbReference>
<dbReference type="InterPro" id="IPR024743">
    <property type="entry name" value="Dynein_HC_stalk"/>
</dbReference>
<dbReference type="InterPro" id="IPR024317">
    <property type="entry name" value="Dynein_heavy_chain_D4_dom"/>
</dbReference>
<dbReference type="InterPro" id="IPR004273">
    <property type="entry name" value="Dynein_heavy_D6_P-loop"/>
</dbReference>
<dbReference type="InterPro" id="IPR013602">
    <property type="entry name" value="Dynein_heavy_linker"/>
</dbReference>
<dbReference type="InterPro" id="IPR013594">
    <property type="entry name" value="Dynein_heavy_tail"/>
</dbReference>
<dbReference type="InterPro" id="IPR042228">
    <property type="entry name" value="Dynein_linker_3"/>
</dbReference>
<dbReference type="InterPro" id="IPR027417">
    <property type="entry name" value="P-loop_NTPase"/>
</dbReference>
<dbReference type="PANTHER" id="PTHR46532:SF15">
    <property type="entry name" value="CYTOPLASMIC DYNEIN 2 HEAVY CHAIN 1"/>
    <property type="match status" value="1"/>
</dbReference>
<dbReference type="PANTHER" id="PTHR46532">
    <property type="entry name" value="MALE FERTILITY FACTOR KL5"/>
    <property type="match status" value="1"/>
</dbReference>
<dbReference type="Pfam" id="PF12774">
    <property type="entry name" value="AAA_6"/>
    <property type="match status" value="1"/>
</dbReference>
<dbReference type="Pfam" id="PF12775">
    <property type="entry name" value="AAA_7"/>
    <property type="match status" value="1"/>
</dbReference>
<dbReference type="Pfam" id="PF12780">
    <property type="entry name" value="AAA_8"/>
    <property type="match status" value="1"/>
</dbReference>
<dbReference type="Pfam" id="PF12781">
    <property type="entry name" value="AAA_9"/>
    <property type="match status" value="1"/>
</dbReference>
<dbReference type="Pfam" id="PF18198">
    <property type="entry name" value="AAA_lid_11"/>
    <property type="match status" value="1"/>
</dbReference>
<dbReference type="Pfam" id="PF08385">
    <property type="entry name" value="DHC_N1"/>
    <property type="match status" value="1"/>
</dbReference>
<dbReference type="Pfam" id="PF08393">
    <property type="entry name" value="DHC_N2"/>
    <property type="match status" value="1"/>
</dbReference>
<dbReference type="Pfam" id="PF22597">
    <property type="entry name" value="DYN_lid"/>
    <property type="match status" value="1"/>
</dbReference>
<dbReference type="Pfam" id="PF21264">
    <property type="entry name" value="DYNC2H1_AAA_dom"/>
    <property type="match status" value="1"/>
</dbReference>
<dbReference type="Pfam" id="PF18199">
    <property type="entry name" value="Dynein_C"/>
    <property type="match status" value="1"/>
</dbReference>
<dbReference type="Pfam" id="PF03028">
    <property type="entry name" value="Dynein_heavy"/>
    <property type="match status" value="1"/>
</dbReference>
<dbReference type="Pfam" id="PF12777">
    <property type="entry name" value="MT"/>
    <property type="match status" value="1"/>
</dbReference>
<dbReference type="SMART" id="SM00382">
    <property type="entry name" value="AAA"/>
    <property type="match status" value="3"/>
</dbReference>
<dbReference type="SUPFAM" id="SSF52540">
    <property type="entry name" value="P-loop containing nucleoside triphosphate hydrolases"/>
    <property type="match status" value="4"/>
</dbReference>
<comment type="function">
    <text evidence="6 7 8">May function as a motor for intraflagellar retrograde transport. Functions in cilia biogenesis. According to PubMed:8666668, it may play a role in transport between endoplasmic reticulum and Golgi or organization of the Golgi in cells.</text>
</comment>
<comment type="subunit">
    <text evidence="1">The cytoplasmic dynein complex 2 is probably composed by a heavy chain DYNC2H1 homodimer and a number of DYNC2LI1 light intermediate chains.</text>
</comment>
<comment type="subcellular location">
    <subcellularLocation>
        <location evidence="8">Cytoplasm</location>
        <location evidence="8">Cytoskeleton</location>
        <location evidence="8">Cilium axoneme</location>
    </subcellularLocation>
    <subcellularLocation>
        <location evidence="8">Cell membrane</location>
        <topology evidence="8">Peripheral membrane protein</topology>
    </subcellularLocation>
    <subcellularLocation>
        <location evidence="8">Cytoplasm</location>
    </subcellularLocation>
    <text evidence="2 8">Localizes to the apical cytoplasm (By similarity). According to PubMed:8666668, it localizes to Golgi apparatus, cytoplasmic vesicle and endoplasmic reticulum (PubMed:8666668).</text>
</comment>
<comment type="alternative products">
    <event type="alternative splicing"/>
    <isoform>
        <id>Q45VK7-1</id>
        <name>1</name>
        <sequence type="displayed"/>
    </isoform>
    <isoform>
        <id>Q45VK7-2</id>
        <name>2</name>
        <sequence type="described" ref="VSP_031286"/>
    </isoform>
    <isoform>
        <id>Q45VK7-3</id>
        <name>3</name>
        <sequence type="described" ref="VSP_031284 VSP_031285"/>
    </isoform>
</comment>
<comment type="tissue specificity">
    <text evidence="4 5">Detected in brain, lung, spleen and kidney (at protein level). Enriched in the ependymal layer lining the lateral ventricles (at protein level).</text>
</comment>
<comment type="developmental stage">
    <text evidence="6">Expressed at 9.5 and 10.5 dpc in the neural tube where it is enriched in rostral part.</text>
</comment>
<comment type="miscellaneous">
    <text>Mice homozygous for Dync2h1 null alleles die at approximately 12.5 dpc with abnormal brain morphology, frequent heart-looping and occasionally with polysyndactily. Cilia have abnormal morphology.</text>
</comment>
<comment type="similarity">
    <text evidence="11">Belongs to the dynein heavy chain family.</text>
</comment>
<comment type="sequence caution" evidence="11">
    <conflict type="erroneous initiation">
        <sequence resource="EMBL-CDS" id="BAB29399"/>
    </conflict>
</comment>
<comment type="sequence caution" evidence="11">
    <conflict type="erroneous initiation">
        <sequence resource="EMBL-CDS" id="BAC38914"/>
    </conflict>
</comment>
<sequence length="4306" mass="492339">MAGSLGDVRKLFLFTTTQNYFGLRPELWDQPPLSNCPEVNNFLDDGNQMLLRVQRSEAGLAFSNTIDFDDAKDKVLVFFKLRPEVITDGNLHNNILVSSMLESPINSLYQAVRQVFAPMLLKDQEWSRNFDPKLQNLLSELEAGLGIVLRKSDTNLPKLKLKEDDTRGILTPSDEFQFWIEQAHRGSKQISKERASYFKELFETISREFYNLDSLSLLEVVDLVETTRDVVDDVWRQTEHDHYPESRMLHLLDVIGGSFGRFVQKKLGSLKLWEDPYYLVKENLKAGISICEQWVIVCSHLTGQVWQRYVPHPWKSGKYFPETLDKLGKRLEEVLAIRTIHEKLLYFLPASEERIVCLSRVFEPFTGVNPVQYNPYTEPLWKAAVSQYEKIIAPAEQKIAGKLKNYISEIQDSPQQLLQAFLKYKELVKRPTISKELMLERETLLARLGDSAKDFRLDFENRCRGIPGDPSGPLSGKNLSEVVNNIVWVRQLELKVDDTIKIAEALLSDLSGFRSFHRSAEDLLDQFKLYEQEQFDDWSREVQSGLSDSRSGLCIEANSRIMELDPNDGALKVHYSDRLVILLREVRQLSALGFVIPAKIQQVANVAQKFCKQAIILKQVAHFYNSIDQQMIQSQRPMMLQSALAFEQIIKNSKAGSGGKSQITWDNPKELEGYIQKLQNAAERLATENRRLRKWHTTFCEKVVILMNIDLLRQQQRWKDGLQELRTGLATVAAQGFQASDMRAWRQHWNHQLYKALEHQYQVGLEALNENLPEINVDLTYKQGRLQFRPPFEEIRAKYYREMKRFIGIPNQFKGVGEAGDESIFSVMIDRNASGFLTIYSKAEDLFRRLSAVLHQHKEWVVIGQVDMEALVEKNLSTVHDWEKNFKALKIKGKEVERLPSAVKVDCLNINCSPVKTVIDDLIQKLFDLLVLSLKKSIQTHIHEIDTFVTEAMKVLTVIPQSVEEIGDTNVQYSNLQDRRPEILPLFQEAEDKNRLLRTVAGGGVETVSNLRAKWDKFELMMESHQLMIKDQIEVMKGNVKSRLQIYYQELDKFKARWDQLKPGDDIIETGQQNTMDQSAKSIKEKKIEFDDLEVIRKKLVDDCHHFGLEEPNFSLAYSISKDIESCAQIWALYEEFQQGLQDMAKEDWITYRAKIYLFEEFLINWHERLRKIEEHSVMTVKLQSEVDRYKMIIPILKYVRGEHLSPDHWLDLFRLLGLPRGTSLEKLLFGDLLRVADTIVEKASELKDLNSRAQGEVTIREALRELDLWGVGAVFSLIDYEDSQNHTIKLIKDWKDIVNQVGDNRCLLQSLKDSPYYKGFEDKVSIWERKLAQLDEYLQNLNHIQRKWVYLEPIFGRGALPKEQTRFNKVDEDFRSIMMDIRKDSRVTTLTTHAGIRNTLLTILDQLQRCQKSLNEFLEEKRSAFPRFYFIGDDDLLEILGQSTNPSVIQSHLKKLFAGINSVCFDEESKHITAMKSLEGEVVPFKSKVLLSNNVEAWLNDLALEMKQTLKQLLKECVTAGRSSQGAIDPSLFPSQILCLAEQIKFTEDVENAIKDHSLHQIEAQLVAKLERYTSVDTSSEDPGNSESGILELKLKALILDIIHNIDIVKQLNQVQVHTTDDWAWKKQVRFYMKSDHTCYVQMVDSELQYTYEYQGNAPKLVYTPLTDKCYLTLTQAMKMGLGGNPYGPAGTGKTESVKALGGLLGRQVLVFNCDEGIDVKSMGRIFVGLVKCGAWGCFDEFNRLEEAVLSAVSMQIQTIQDALKNHRTVCELLGKEVEINANSGIFITMNPAGKGYGGRQKLPDNLKQLFRPVAMSRPDNDLIAEVILYSEGFKDAKELGRKLVAIFNLSRELLTPQQHYDWGLRALKTVLRGSGNLLRQLKKNSTKQDVNENHIVVQALRLNTMSKFTFADCTRFDALIKDVFPGIDFKEVEYDELSSALKQVFEEANYEVIPNQMKKALELYEQLRQRTGVVIVGPSGAGKSTLWRMLRAALCKIGKVVKQYTMNPKAMPRHQLLGHIDMDTREWSDGVLTNSARQVVREPQDVSSWIICDGDIDPEWIESLNSVLDDNRLLTMPSGERIQFGPNVNFVFETHDLSCASPATISRMGMIFLSDEETDLNSLIKSWLRNQPLEYRSNLENWIGDYFSKALQWVLKQNDYVVETSLVGTVMNGLSHLHGCKYHDQFIINLIRGLGGNLNMKSRLEFTKEVFNWARETPPDSHRPMDTYYDCDRGQLASYMLKKPESLTADDFSNGHILPVIQTPDMQRGLDYFKPWLSSDTKQPFILVGPEGCGKGMLLRYAFSQLRSTEIATIHCSAQTTSRHLLQKLSQTCMVISTNTGRVYRPKDCERLVLYLKDINLPKLDKWGTSTLVAFLQQVLTYQGFYDENLEWVGLENIQIVASMSAGGRLGRHKLTTRFTSIVRLCAIDYPEREQLQTIYGAYLEAVLHKNLKNHSIWGSSSKIYLLAGSMVQVYEQVRAKFTVDEYSHYFFTPCILTQWVLGLFRYDLEGGSSNHPLDYVLEIVAYEARRLFRDKIVGVKELHLFDNILTSVLQGDWGSDILDNMADSFYVTWGAHHVSGGKTAPGQPLPPHGKPLGKLTSADLKDVIKKGLIHYGRDNQNLDILLFQEVLEYMSRIDRVLSFPGGSLLLAGRSGVGRRTVTSLVSHMHGAVLFSPKISRGYEPKQFRNDLKHVLQLAGIEAQQVVLLLEDYQFVHPTFLEMINSLLASGEVPGLYTLEELEPLLLPLKDQASQDGFFGPVFNYFTYRIQQNLHIVLIMDSANLNFIVNCESNPALHKKCQVLWMEGWSDSSMKKIPEMLFSETDGEEKYEKKRKDEKKRNSVDPDFIKSFLLIHESCKAYGATPSRYMTFLHVYSAISSSKKKELLKRQSHLQAGVSKLNEAKALVDELNRKAGEQSILLRIKQDEADSALQEITVSMQDASEQKTELERLKQRIAEEVVKIEERKSKIDDELKEVQPLVNEAKLAVGNIRPESLSEIRSLRMPPDVIRDILEGVLRLMGIFDTSWVSMKSFLAKRGVREDIATFDARNIPKEIRESVEELLFKNKASFDPKNAKRASTAAAPLAAWVKANVQYSHVLERIQPLETEQSGLELNLKKTEDRKRKLEDLLNSVGQKVSELKEKFQSRTSEAAKLEAEVSKAQETIKAAEVLISQLDREHRRWNAQVAEIAEELATLPKRAQLAAAFITYLSAAPEGLRKNCLEEWTKAAGLEKFDLRRFLCTESEQLIWKSEGLPSDDLSIENALVILQSRVCPFLIDPSSQATEWLKTHLKDSHLEVINQQDSNFITALELAVRFGKTLIIQEMDGVEPVLYPLLRRDLVAQGPRYVVQIGDKIIDYNEDFRLFLSTRNPNPFIPPDAASIVTEVNFTTTRSGLRGQLLALTIQHEKPDLEEQKTKLLQQEEDKKIQLARLEESLLETLATSQGNILENKDLIESLNQTKASSALIQDSLKESYKLQISLDQERDAYLPLAESASKMYFIISDLSKINNMYRFSLASFLRLFQRALQNKQDSENTEERIQCLVNSLKHMVYEYICRCLFKADQLMFALHFVRGMHPELFQENEWDTFTGVVVGDMLRKADSQQRIRDQLPSWIDQERSWAVATLKISLPSLYQTLCLEDGAFWRTYYHHSMCEQEFPSILAKKVSLFQQVLVVQALRPDRLQSAMALFACKALGLKELSPLPLNLKRLYKETLEIEPILIIISPGADPSQELQELASAERSSECYHQVAMGQGQADLAIQMLKECARNGDWLCLKNLHLVVSWLPVLEKELNTLQPKDSFRLWLTAEVHPNFTPILLQSSLKITYESPPGLKKNLMRTYESWTPEQISKRDNIHRAHALFSLAWFHAACQERRNYIPQGWTKFYEFSLSDLRAGYHVIDRLFDGTKDVQWEFVHGLLENSIYGGRVDNYFDLRVLQSYLKQFFNSSIIDVLNQRNKKSIFPYSISLPNSCSILDYRAVIEKLPEDDKPSFFGLPANIARSSQRMISSQVISQLRILGRSVTAGCKFDREIWSNELSPVLNLWKKLNQNSNLIHQKVSPPNDRQGSPILSFIILEQFNAIRLVQSVHQSLAALSKVIRGTTLLSSEVQKLASALLNQKCPLTWQSRWEGPEDPLQYLRGLVARTLAIQNWVEKAEKQVLLADTLDLSELFHPDTFLNALRQETARATGCSVDSLKFVASWKGRLQEAKLQIKISGLLLEGCSFDGNRLSENQHDSPSVSSVLPCYMGWTPQGSYGPYSPDECISLPVYTSAERERVVTNIDVPCGGNQDQWIQCGAALFLKNQ</sequence>
<evidence type="ECO:0000250" key="1"/>
<evidence type="ECO:0000250" key="2">
    <source>
        <dbReference type="UniProtKB" id="Q9JJ79"/>
    </source>
</evidence>
<evidence type="ECO:0000255" key="3"/>
<evidence type="ECO:0000269" key="4">
    <source>
    </source>
</evidence>
<evidence type="ECO:0000269" key="5">
    <source>
    </source>
</evidence>
<evidence type="ECO:0000269" key="6">
    <source>
    </source>
</evidence>
<evidence type="ECO:0000269" key="7">
    <source>
    </source>
</evidence>
<evidence type="ECO:0000269" key="8">
    <source>
    </source>
</evidence>
<evidence type="ECO:0000303" key="9">
    <source>
    </source>
</evidence>
<evidence type="ECO:0000303" key="10">
    <source ref="4"/>
</evidence>
<evidence type="ECO:0000305" key="11"/>
<reference key="1">
    <citation type="journal article" date="2005" name="Proc. Natl. Acad. Sci. U.S.A.">
        <title>Cilia and Hedgehog responsiveness in the mouse.</title>
        <authorList>
            <person name="Huangfu D."/>
            <person name="Anderson K.V."/>
        </authorList>
    </citation>
    <scope>NUCLEOTIDE SEQUENCE [MRNA] (ISOFORM 1)</scope>
    <scope>FUNCTION</scope>
    <scope>MUTAGENESIS OF PHE-3890</scope>
    <scope>DEVELOPMENTAL STAGE</scope>
    <source>
        <strain>C57BL/6J</strain>
    </source>
</reference>
<reference key="2">
    <citation type="journal article" date="2005" name="Science">
        <title>The transcriptional landscape of the mammalian genome.</title>
        <authorList>
            <person name="Carninci P."/>
            <person name="Kasukawa T."/>
            <person name="Katayama S."/>
            <person name="Gough J."/>
            <person name="Frith M.C."/>
            <person name="Maeda N."/>
            <person name="Oyama R."/>
            <person name="Ravasi T."/>
            <person name="Lenhard B."/>
            <person name="Wells C."/>
            <person name="Kodzius R."/>
            <person name="Shimokawa K."/>
            <person name="Bajic V.B."/>
            <person name="Brenner S.E."/>
            <person name="Batalov S."/>
            <person name="Forrest A.R."/>
            <person name="Zavolan M."/>
            <person name="Davis M.J."/>
            <person name="Wilming L.G."/>
            <person name="Aidinis V."/>
            <person name="Allen J.E."/>
            <person name="Ambesi-Impiombato A."/>
            <person name="Apweiler R."/>
            <person name="Aturaliya R.N."/>
            <person name="Bailey T.L."/>
            <person name="Bansal M."/>
            <person name="Baxter L."/>
            <person name="Beisel K.W."/>
            <person name="Bersano T."/>
            <person name="Bono H."/>
            <person name="Chalk A.M."/>
            <person name="Chiu K.P."/>
            <person name="Choudhary V."/>
            <person name="Christoffels A."/>
            <person name="Clutterbuck D.R."/>
            <person name="Crowe M.L."/>
            <person name="Dalla E."/>
            <person name="Dalrymple B.P."/>
            <person name="de Bono B."/>
            <person name="Della Gatta G."/>
            <person name="di Bernardo D."/>
            <person name="Down T."/>
            <person name="Engstrom P."/>
            <person name="Fagiolini M."/>
            <person name="Faulkner G."/>
            <person name="Fletcher C.F."/>
            <person name="Fukushima T."/>
            <person name="Furuno M."/>
            <person name="Futaki S."/>
            <person name="Gariboldi M."/>
            <person name="Georgii-Hemming P."/>
            <person name="Gingeras T.R."/>
            <person name="Gojobori T."/>
            <person name="Green R.E."/>
            <person name="Gustincich S."/>
            <person name="Harbers M."/>
            <person name="Hayashi Y."/>
            <person name="Hensch T.K."/>
            <person name="Hirokawa N."/>
            <person name="Hill D."/>
            <person name="Huminiecki L."/>
            <person name="Iacono M."/>
            <person name="Ikeo K."/>
            <person name="Iwama A."/>
            <person name="Ishikawa T."/>
            <person name="Jakt M."/>
            <person name="Kanapin A."/>
            <person name="Katoh M."/>
            <person name="Kawasawa Y."/>
            <person name="Kelso J."/>
            <person name="Kitamura H."/>
            <person name="Kitano H."/>
            <person name="Kollias G."/>
            <person name="Krishnan S.P."/>
            <person name="Kruger A."/>
            <person name="Kummerfeld S.K."/>
            <person name="Kurochkin I.V."/>
            <person name="Lareau L.F."/>
            <person name="Lazarevic D."/>
            <person name="Lipovich L."/>
            <person name="Liu J."/>
            <person name="Liuni S."/>
            <person name="McWilliam S."/>
            <person name="Madan Babu M."/>
            <person name="Madera M."/>
            <person name="Marchionni L."/>
            <person name="Matsuda H."/>
            <person name="Matsuzawa S."/>
            <person name="Miki H."/>
            <person name="Mignone F."/>
            <person name="Miyake S."/>
            <person name="Morris K."/>
            <person name="Mottagui-Tabar S."/>
            <person name="Mulder N."/>
            <person name="Nakano N."/>
            <person name="Nakauchi H."/>
            <person name="Ng P."/>
            <person name="Nilsson R."/>
            <person name="Nishiguchi S."/>
            <person name="Nishikawa S."/>
            <person name="Nori F."/>
            <person name="Ohara O."/>
            <person name="Okazaki Y."/>
            <person name="Orlando V."/>
            <person name="Pang K.C."/>
            <person name="Pavan W.J."/>
            <person name="Pavesi G."/>
            <person name="Pesole G."/>
            <person name="Petrovsky N."/>
            <person name="Piazza S."/>
            <person name="Reed J."/>
            <person name="Reid J.F."/>
            <person name="Ring B.Z."/>
            <person name="Ringwald M."/>
            <person name="Rost B."/>
            <person name="Ruan Y."/>
            <person name="Salzberg S.L."/>
            <person name="Sandelin A."/>
            <person name="Schneider C."/>
            <person name="Schoenbach C."/>
            <person name="Sekiguchi K."/>
            <person name="Semple C.A."/>
            <person name="Seno S."/>
            <person name="Sessa L."/>
            <person name="Sheng Y."/>
            <person name="Shibata Y."/>
            <person name="Shimada H."/>
            <person name="Shimada K."/>
            <person name="Silva D."/>
            <person name="Sinclair B."/>
            <person name="Sperling S."/>
            <person name="Stupka E."/>
            <person name="Sugiura K."/>
            <person name="Sultana R."/>
            <person name="Takenaka Y."/>
            <person name="Taki K."/>
            <person name="Tammoja K."/>
            <person name="Tan S.L."/>
            <person name="Tang S."/>
            <person name="Taylor M.S."/>
            <person name="Tegner J."/>
            <person name="Teichmann S.A."/>
            <person name="Ueda H.R."/>
            <person name="van Nimwegen E."/>
            <person name="Verardo R."/>
            <person name="Wei C.L."/>
            <person name="Yagi K."/>
            <person name="Yamanishi H."/>
            <person name="Zabarovsky E."/>
            <person name="Zhu S."/>
            <person name="Zimmer A."/>
            <person name="Hide W."/>
            <person name="Bult C."/>
            <person name="Grimmond S.M."/>
            <person name="Teasdale R.D."/>
            <person name="Liu E.T."/>
            <person name="Brusic V."/>
            <person name="Quackenbush J."/>
            <person name="Wahlestedt C."/>
            <person name="Mattick J.S."/>
            <person name="Hume D.A."/>
            <person name="Kai C."/>
            <person name="Sasaki D."/>
            <person name="Tomaru Y."/>
            <person name="Fukuda S."/>
            <person name="Kanamori-Katayama M."/>
            <person name="Suzuki M."/>
            <person name="Aoki J."/>
            <person name="Arakawa T."/>
            <person name="Iida J."/>
            <person name="Imamura K."/>
            <person name="Itoh M."/>
            <person name="Kato T."/>
            <person name="Kawaji H."/>
            <person name="Kawagashira N."/>
            <person name="Kawashima T."/>
            <person name="Kojima M."/>
            <person name="Kondo S."/>
            <person name="Konno H."/>
            <person name="Nakano K."/>
            <person name="Ninomiya N."/>
            <person name="Nishio T."/>
            <person name="Okada M."/>
            <person name="Plessy C."/>
            <person name="Shibata K."/>
            <person name="Shiraki T."/>
            <person name="Suzuki S."/>
            <person name="Tagami M."/>
            <person name="Waki K."/>
            <person name="Watahiki A."/>
            <person name="Okamura-Oho Y."/>
            <person name="Suzuki H."/>
            <person name="Kawai J."/>
            <person name="Hayashizaki Y."/>
        </authorList>
    </citation>
    <scope>NUCLEOTIDE SEQUENCE [LARGE SCALE MRNA] (ISOFORM 3)</scope>
    <scope>NUCLEOTIDE SEQUENCE [LARGE SCALE MRNA] OF 1-889; 1858-2833 AND 3654-4306 (ISOFORM 1)</scope>
    <source>
        <strain>C57BL/6J</strain>
        <tissue>Adrenal gland</tissue>
        <tissue>Corpora quadrigemina</tissue>
        <tissue>Heart</tissue>
        <tissue>Wolffian duct</tissue>
    </source>
</reference>
<reference key="3">
    <citation type="journal article" date="2009" name="PLoS Biol.">
        <title>Lineage-specific biology revealed by a finished genome assembly of the mouse.</title>
        <authorList>
            <person name="Church D.M."/>
            <person name="Goodstadt L."/>
            <person name="Hillier L.W."/>
            <person name="Zody M.C."/>
            <person name="Goldstein S."/>
            <person name="She X."/>
            <person name="Bult C.J."/>
            <person name="Agarwala R."/>
            <person name="Cherry J.L."/>
            <person name="DiCuccio M."/>
            <person name="Hlavina W."/>
            <person name="Kapustin Y."/>
            <person name="Meric P."/>
            <person name="Maglott D."/>
            <person name="Birtle Z."/>
            <person name="Marques A.C."/>
            <person name="Graves T."/>
            <person name="Zhou S."/>
            <person name="Teague B."/>
            <person name="Potamousis K."/>
            <person name="Churas C."/>
            <person name="Place M."/>
            <person name="Herschleb J."/>
            <person name="Runnheim R."/>
            <person name="Forrest D."/>
            <person name="Amos-Landgraf J."/>
            <person name="Schwartz D.C."/>
            <person name="Cheng Z."/>
            <person name="Lindblad-Toh K."/>
            <person name="Eichler E.E."/>
            <person name="Ponting C.P."/>
        </authorList>
    </citation>
    <scope>NUCLEOTIDE SEQUENCE [LARGE SCALE GENOMIC DNA]</scope>
    <source>
        <strain>C57BL/6J</strain>
    </source>
</reference>
<reference key="4">
    <citation type="submission" date="2003-10" db="EMBL/GenBank/DDBJ databases">
        <title>Genomic organization of mouse cytoplasmic dynein heavy chain 2.</title>
        <authorList>
            <person name="Barbaric I."/>
            <person name="Bauer T."/>
            <person name="Wei G."/>
        </authorList>
    </citation>
    <scope>NUCLEOTIDE SEQUENCE [MRNA] OF 1-1850; 1897-2503; 2516-2974 AND 3076-4306 (ISOFORM 2)</scope>
    <source>
        <strain>BALB/cJ</strain>
        <tissue>Thymus</tissue>
    </source>
</reference>
<reference key="5">
    <citation type="journal article" date="1997" name="Gene">
        <title>Identification of dynein heavy chain genes expressed in human and mouse testis: chromosomal localization of an axonemal dynein gene.</title>
        <authorList>
            <person name="Neesen J."/>
            <person name="Koehler M.R."/>
            <person name="Kirschner R."/>
            <person name="Steinlein C."/>
            <person name="Kreutzberger J."/>
            <person name="Engel W."/>
            <person name="Schmid M."/>
        </authorList>
    </citation>
    <scope>NUCLEOTIDE SEQUENCE [MRNA] OF 1662-1868 (ISOFORM 1)</scope>
    <source>
        <strain>NMRI</strain>
        <tissue>Testis</tissue>
    </source>
</reference>
<reference key="6">
    <citation type="journal article" date="2004" name="DNA Res.">
        <title>Prediction of the coding sequences of mouse homologues of KIAA gene: IV. The complete nucleotide sequences of 500 mouse KIAA-homologous cDNAs identified by screening of terminal sequences of cDNA clones randomly sampled from size-fractionated libraries.</title>
        <authorList>
            <person name="Okazaki N."/>
            <person name="Kikuno R."/>
            <person name="Ohara R."/>
            <person name="Inamoto S."/>
            <person name="Koseki H."/>
            <person name="Hiraoka S."/>
            <person name="Saga Y."/>
            <person name="Seino S."/>
            <person name="Nishimura M."/>
            <person name="Kaisho T."/>
            <person name="Hoshino K."/>
            <person name="Kitamura H."/>
            <person name="Nagase T."/>
            <person name="Ohara O."/>
            <person name="Koga H."/>
        </authorList>
    </citation>
    <scope>NUCLEOTIDE SEQUENCE [LARGE SCALE MRNA] OF 3081-4306 (ISOFORM 1)</scope>
    <source>
        <tissue>Thymus</tissue>
    </source>
</reference>
<reference key="7">
    <citation type="journal article" date="1996" name="J. Cell Biol.">
        <title>Mammalian cells express three distinct dynein heavy chains that are localized to different cytoplasmic organelles.</title>
        <authorList>
            <person name="Vaisberg E.A."/>
            <person name="Grissom P.M."/>
            <person name="McIntosh J.R."/>
        </authorList>
    </citation>
    <scope>FUNCTION</scope>
    <scope>SUBCELLULAR LOCATION</scope>
</reference>
<reference key="8">
    <citation type="journal article" date="2002" name="J. Cell Sci.">
        <title>Molecular structure of cytoplasmic dynein 2 and its distribution in neuronal and ciliated cells.</title>
        <authorList>
            <person name="Mikami A."/>
            <person name="Tynan S.H."/>
            <person name="Hama T."/>
            <person name="Luby-Phelps K."/>
            <person name="Saito T."/>
            <person name="Crandall J.E."/>
            <person name="Besharse J.C."/>
            <person name="Vallee R.B."/>
        </authorList>
    </citation>
    <scope>TISSUE SPECIFICITY</scope>
</reference>
<reference key="9">
    <citation type="journal article" date="2002" name="Mol. Biol. Cell">
        <title>Identification of a novel light intermediate chain (D2LIC) for mammalian cytoplasmic dynein 2.</title>
        <authorList>
            <person name="Grissom P.M."/>
            <person name="Vaisberg E.A."/>
            <person name="McIntosh J.R."/>
        </authorList>
    </citation>
    <scope>TISSUE SPECIFICITY</scope>
</reference>
<reference key="10">
    <citation type="journal article" date="2005" name="Dev. Biol.">
        <title>Loss of the retrograde motor for IFT disrupts localization of Smo to cilia and prevents the expression of both activator and repressor functions of Gli.</title>
        <authorList>
            <person name="May S.R."/>
            <person name="Ashique A.M."/>
            <person name="Karlen M."/>
            <person name="Wang B."/>
            <person name="Shen Y."/>
            <person name="Zarbalis K."/>
            <person name="Reiter J."/>
            <person name="Ericson J."/>
            <person name="Peterson A.S."/>
        </authorList>
    </citation>
    <scope>FUNCTION</scope>
    <scope>MUTAGENESIS OF TRP-2502</scope>
</reference>
<reference key="11">
    <citation type="journal article" date="2010" name="Cell">
        <title>A tissue-specific atlas of mouse protein phosphorylation and expression.</title>
        <authorList>
            <person name="Huttlin E.L."/>
            <person name="Jedrychowski M.P."/>
            <person name="Elias J.E."/>
            <person name="Goswami T."/>
            <person name="Rad R."/>
            <person name="Beausoleil S.A."/>
            <person name="Villen J."/>
            <person name="Haas W."/>
            <person name="Sowa M.E."/>
            <person name="Gygi S.P."/>
        </authorList>
    </citation>
    <scope>IDENTIFICATION BY MASS SPECTROMETRY [LARGE SCALE ANALYSIS]</scope>
    <source>
        <tissue>Brain</tissue>
        <tissue>Kidney</tissue>
        <tissue>Lung</tissue>
        <tissue>Spleen</tissue>
        <tissue>Testis</tissue>
    </source>
</reference>
<name>DYHC2_MOUSE</name>
<gene>
    <name type="primary">Dync2h1</name>
    <name type="synonym">Dhc1b</name>
    <name type="synonym">Dnchc2</name>
    <name type="synonym">Kiaa1997</name>
</gene>
<accession>Q45VK7</accession>
<accession>B8JJF9</accession>
<accession>B8JJG0</accession>
<accession>O08822</accession>
<accession>Q5VI59</accession>
<accession>Q5VI60</accession>
<accession>Q5VI61</accession>
<accession>Q5VI62</accession>
<accession>Q69Z42</accession>
<accession>Q8BJL5</accession>
<accession>Q8BL87</accession>
<accession>Q8BMC7</accession>
<accession>Q8BUI9</accession>
<accession>Q8BXK5</accession>
<accession>Q9CRR8</accession>
<organism>
    <name type="scientific">Mus musculus</name>
    <name type="common">Mouse</name>
    <dbReference type="NCBI Taxonomy" id="10090"/>
    <lineage>
        <taxon>Eukaryota</taxon>
        <taxon>Metazoa</taxon>
        <taxon>Chordata</taxon>
        <taxon>Craniata</taxon>
        <taxon>Vertebrata</taxon>
        <taxon>Euteleostomi</taxon>
        <taxon>Mammalia</taxon>
        <taxon>Eutheria</taxon>
        <taxon>Euarchontoglires</taxon>
        <taxon>Glires</taxon>
        <taxon>Rodentia</taxon>
        <taxon>Myomorpha</taxon>
        <taxon>Muroidea</taxon>
        <taxon>Muridae</taxon>
        <taxon>Murinae</taxon>
        <taxon>Mus</taxon>
        <taxon>Mus</taxon>
    </lineage>
</organism>
<keyword id="KW-0025">Alternative splicing</keyword>
<keyword id="KW-0067">ATP-binding</keyword>
<keyword id="KW-1003">Cell membrane</keyword>
<keyword id="KW-0966">Cell projection</keyword>
<keyword id="KW-0969">Cilium</keyword>
<keyword id="KW-0970">Cilium biogenesis/degradation</keyword>
<keyword id="KW-0175">Coiled coil</keyword>
<keyword id="KW-0963">Cytoplasm</keyword>
<keyword id="KW-0206">Cytoskeleton</keyword>
<keyword id="KW-0217">Developmental protein</keyword>
<keyword id="KW-0243">Dynein</keyword>
<keyword id="KW-0472">Membrane</keyword>
<keyword id="KW-0493">Microtubule</keyword>
<keyword id="KW-0505">Motor protein</keyword>
<keyword id="KW-0547">Nucleotide-binding</keyword>
<keyword id="KW-1185">Reference proteome</keyword>
<proteinExistence type="evidence at protein level"/>